<keyword id="KW-0488">Methylation</keyword>
<keyword id="KW-0687">Ribonucleoprotein</keyword>
<keyword id="KW-0689">Ribosomal protein</keyword>
<keyword id="KW-0694">RNA-binding</keyword>
<keyword id="KW-0699">rRNA-binding</keyword>
<keyword id="KW-0820">tRNA-binding</keyword>
<reference key="1">
    <citation type="journal article" date="2009" name="J. Bacteriol.">
        <title>Genome sequence of Azotobacter vinelandii, an obligate aerobe specialized to support diverse anaerobic metabolic processes.</title>
        <authorList>
            <person name="Setubal J.C."/>
            <person name="Dos Santos P."/>
            <person name="Goldman B.S."/>
            <person name="Ertesvaag H."/>
            <person name="Espin G."/>
            <person name="Rubio L.M."/>
            <person name="Valla S."/>
            <person name="Almeida N.F."/>
            <person name="Balasubramanian D."/>
            <person name="Cromes L."/>
            <person name="Curatti L."/>
            <person name="Du Z."/>
            <person name="Godsy E."/>
            <person name="Goodner B."/>
            <person name="Hellner-Burris K."/>
            <person name="Hernandez J.A."/>
            <person name="Houmiel K."/>
            <person name="Imperial J."/>
            <person name="Kennedy C."/>
            <person name="Larson T.J."/>
            <person name="Latreille P."/>
            <person name="Ligon L.S."/>
            <person name="Lu J."/>
            <person name="Maerk M."/>
            <person name="Miller N.M."/>
            <person name="Norton S."/>
            <person name="O'Carroll I.P."/>
            <person name="Paulsen I."/>
            <person name="Raulfs E.C."/>
            <person name="Roemer R."/>
            <person name="Rosser J."/>
            <person name="Segura D."/>
            <person name="Slater S."/>
            <person name="Stricklin S.L."/>
            <person name="Studholme D.J."/>
            <person name="Sun J."/>
            <person name="Viana C.J."/>
            <person name="Wallin E."/>
            <person name="Wang B."/>
            <person name="Wheeler C."/>
            <person name="Zhu H."/>
            <person name="Dean D.R."/>
            <person name="Dixon R."/>
            <person name="Wood D."/>
        </authorList>
    </citation>
    <scope>NUCLEOTIDE SEQUENCE [LARGE SCALE GENOMIC DNA]</scope>
    <source>
        <strain>DJ / ATCC BAA-1303</strain>
    </source>
</reference>
<dbReference type="EMBL" id="CP001157">
    <property type="protein sequence ID" value="ACO76870.1"/>
    <property type="molecule type" value="Genomic_DNA"/>
</dbReference>
<dbReference type="RefSeq" id="WP_012699298.1">
    <property type="nucleotide sequence ID" value="NC_012560.1"/>
</dbReference>
<dbReference type="SMR" id="C1DKK7"/>
<dbReference type="STRING" id="322710.Avin_06190"/>
<dbReference type="EnsemblBacteria" id="ACO76870">
    <property type="protein sequence ID" value="ACO76870"/>
    <property type="gene ID" value="Avin_06190"/>
</dbReference>
<dbReference type="GeneID" id="88184031"/>
<dbReference type="KEGG" id="avn:Avin_06190"/>
<dbReference type="eggNOG" id="COG0048">
    <property type="taxonomic scope" value="Bacteria"/>
</dbReference>
<dbReference type="HOGENOM" id="CLU_104295_1_2_6"/>
<dbReference type="OrthoDB" id="9802366at2"/>
<dbReference type="Proteomes" id="UP000002424">
    <property type="component" value="Chromosome"/>
</dbReference>
<dbReference type="GO" id="GO:0015935">
    <property type="term" value="C:small ribosomal subunit"/>
    <property type="evidence" value="ECO:0007669"/>
    <property type="project" value="InterPro"/>
</dbReference>
<dbReference type="GO" id="GO:0019843">
    <property type="term" value="F:rRNA binding"/>
    <property type="evidence" value="ECO:0007669"/>
    <property type="project" value="UniProtKB-UniRule"/>
</dbReference>
<dbReference type="GO" id="GO:0003735">
    <property type="term" value="F:structural constituent of ribosome"/>
    <property type="evidence" value="ECO:0007669"/>
    <property type="project" value="InterPro"/>
</dbReference>
<dbReference type="GO" id="GO:0000049">
    <property type="term" value="F:tRNA binding"/>
    <property type="evidence" value="ECO:0007669"/>
    <property type="project" value="UniProtKB-UniRule"/>
</dbReference>
<dbReference type="GO" id="GO:0006412">
    <property type="term" value="P:translation"/>
    <property type="evidence" value="ECO:0007669"/>
    <property type="project" value="UniProtKB-UniRule"/>
</dbReference>
<dbReference type="CDD" id="cd03368">
    <property type="entry name" value="Ribosomal_S12"/>
    <property type="match status" value="1"/>
</dbReference>
<dbReference type="FunFam" id="2.40.50.140:FF:000001">
    <property type="entry name" value="30S ribosomal protein S12"/>
    <property type="match status" value="1"/>
</dbReference>
<dbReference type="Gene3D" id="2.40.50.140">
    <property type="entry name" value="Nucleic acid-binding proteins"/>
    <property type="match status" value="1"/>
</dbReference>
<dbReference type="HAMAP" id="MF_00403_B">
    <property type="entry name" value="Ribosomal_uS12_B"/>
    <property type="match status" value="1"/>
</dbReference>
<dbReference type="InterPro" id="IPR012340">
    <property type="entry name" value="NA-bd_OB-fold"/>
</dbReference>
<dbReference type="InterPro" id="IPR006032">
    <property type="entry name" value="Ribosomal_uS12"/>
</dbReference>
<dbReference type="InterPro" id="IPR005679">
    <property type="entry name" value="Ribosomal_uS12_bac"/>
</dbReference>
<dbReference type="NCBIfam" id="TIGR00981">
    <property type="entry name" value="rpsL_bact"/>
    <property type="match status" value="1"/>
</dbReference>
<dbReference type="PANTHER" id="PTHR11652">
    <property type="entry name" value="30S RIBOSOMAL PROTEIN S12 FAMILY MEMBER"/>
    <property type="match status" value="1"/>
</dbReference>
<dbReference type="Pfam" id="PF00164">
    <property type="entry name" value="Ribosom_S12_S23"/>
    <property type="match status" value="1"/>
</dbReference>
<dbReference type="PIRSF" id="PIRSF002133">
    <property type="entry name" value="Ribosomal_S12/S23"/>
    <property type="match status" value="1"/>
</dbReference>
<dbReference type="PRINTS" id="PR01034">
    <property type="entry name" value="RIBOSOMALS12"/>
</dbReference>
<dbReference type="SUPFAM" id="SSF50249">
    <property type="entry name" value="Nucleic acid-binding proteins"/>
    <property type="match status" value="1"/>
</dbReference>
<dbReference type="PROSITE" id="PS00055">
    <property type="entry name" value="RIBOSOMAL_S12"/>
    <property type="match status" value="1"/>
</dbReference>
<protein>
    <recommendedName>
        <fullName evidence="2">Small ribosomal subunit protein uS12</fullName>
    </recommendedName>
    <alternativeName>
        <fullName evidence="4">30S ribosomal protein S12</fullName>
    </alternativeName>
</protein>
<name>RS12_AZOVD</name>
<organism>
    <name type="scientific">Azotobacter vinelandii (strain DJ / ATCC BAA-1303)</name>
    <dbReference type="NCBI Taxonomy" id="322710"/>
    <lineage>
        <taxon>Bacteria</taxon>
        <taxon>Pseudomonadati</taxon>
        <taxon>Pseudomonadota</taxon>
        <taxon>Gammaproteobacteria</taxon>
        <taxon>Pseudomonadales</taxon>
        <taxon>Pseudomonadaceae</taxon>
        <taxon>Azotobacter</taxon>
    </lineage>
</organism>
<gene>
    <name evidence="2" type="primary">rpsL</name>
    <name type="ordered locus">Avin_06190</name>
</gene>
<evidence type="ECO:0000250" key="1"/>
<evidence type="ECO:0000255" key="2">
    <source>
        <dbReference type="HAMAP-Rule" id="MF_00403"/>
    </source>
</evidence>
<evidence type="ECO:0000256" key="3">
    <source>
        <dbReference type="SAM" id="MobiDB-lite"/>
    </source>
</evidence>
<evidence type="ECO:0000305" key="4"/>
<sequence length="123" mass="13825">MATINQLVRQPRKRLVEKSDVPALQNCPQRRGVCTRVYTTTPKKPNSALRKVCRVRLTNGYEVTSYIGGEGHNLQEHSVVLIRGGRVKDLPGVRYHTVRGSLDTSGVKDRKQGRSKYGAKRPK</sequence>
<accession>C1DKK7</accession>
<proteinExistence type="inferred from homology"/>
<comment type="function">
    <text evidence="2">With S4 and S5 plays an important role in translational accuracy.</text>
</comment>
<comment type="function">
    <text evidence="2">Interacts with and stabilizes bases of the 16S rRNA that are involved in tRNA selection in the A site and with the mRNA backbone. Located at the interface of the 30S and 50S subunits, it traverses the body of the 30S subunit contacting proteins on the other side and probably holding the rRNA structure together. The combined cluster of proteins S8, S12 and S17 appears to hold together the shoulder and platform of the 30S subunit.</text>
</comment>
<comment type="subunit">
    <text evidence="2">Part of the 30S ribosomal subunit. Contacts proteins S8 and S17. May interact with IF1 in the 30S initiation complex.</text>
</comment>
<comment type="similarity">
    <text evidence="2">Belongs to the universal ribosomal protein uS12 family.</text>
</comment>
<feature type="chain" id="PRO_1000205905" description="Small ribosomal subunit protein uS12">
    <location>
        <begin position="1"/>
        <end position="123"/>
    </location>
</feature>
<feature type="region of interest" description="Disordered" evidence="3">
    <location>
        <begin position="101"/>
        <end position="123"/>
    </location>
</feature>
<feature type="compositionally biased region" description="Basic residues" evidence="3">
    <location>
        <begin position="113"/>
        <end position="123"/>
    </location>
</feature>
<feature type="modified residue" description="3-methylthioaspartic acid" evidence="1">
    <location>
        <position position="89"/>
    </location>
</feature>